<dbReference type="EC" id="6.1.1.3" evidence="1"/>
<dbReference type="EMBL" id="CP000266">
    <property type="protein sequence ID" value="ABF03686.1"/>
    <property type="molecule type" value="Genomic_DNA"/>
</dbReference>
<dbReference type="RefSeq" id="WP_001144202.1">
    <property type="nucleotide sequence ID" value="NC_008258.1"/>
</dbReference>
<dbReference type="SMR" id="Q0T4S9"/>
<dbReference type="GeneID" id="93775932"/>
<dbReference type="KEGG" id="sfv:SFV_1504"/>
<dbReference type="HOGENOM" id="CLU_008554_0_1_6"/>
<dbReference type="Proteomes" id="UP000000659">
    <property type="component" value="Chromosome"/>
</dbReference>
<dbReference type="GO" id="GO:0005829">
    <property type="term" value="C:cytosol"/>
    <property type="evidence" value="ECO:0007669"/>
    <property type="project" value="TreeGrafter"/>
</dbReference>
<dbReference type="GO" id="GO:0005524">
    <property type="term" value="F:ATP binding"/>
    <property type="evidence" value="ECO:0007669"/>
    <property type="project" value="UniProtKB-UniRule"/>
</dbReference>
<dbReference type="GO" id="GO:0046872">
    <property type="term" value="F:metal ion binding"/>
    <property type="evidence" value="ECO:0007669"/>
    <property type="project" value="UniProtKB-KW"/>
</dbReference>
<dbReference type="GO" id="GO:0004829">
    <property type="term" value="F:threonine-tRNA ligase activity"/>
    <property type="evidence" value="ECO:0007669"/>
    <property type="project" value="UniProtKB-UniRule"/>
</dbReference>
<dbReference type="GO" id="GO:0000049">
    <property type="term" value="F:tRNA binding"/>
    <property type="evidence" value="ECO:0007669"/>
    <property type="project" value="UniProtKB-KW"/>
</dbReference>
<dbReference type="GO" id="GO:0006435">
    <property type="term" value="P:threonyl-tRNA aminoacylation"/>
    <property type="evidence" value="ECO:0007669"/>
    <property type="project" value="UniProtKB-UniRule"/>
</dbReference>
<dbReference type="CDD" id="cd01667">
    <property type="entry name" value="TGS_ThrRS"/>
    <property type="match status" value="1"/>
</dbReference>
<dbReference type="CDD" id="cd00860">
    <property type="entry name" value="ThrRS_anticodon"/>
    <property type="match status" value="1"/>
</dbReference>
<dbReference type="CDD" id="cd00771">
    <property type="entry name" value="ThrRS_core"/>
    <property type="match status" value="1"/>
</dbReference>
<dbReference type="FunFam" id="3.10.20.30:FF:000005">
    <property type="entry name" value="Threonine--tRNA ligase"/>
    <property type="match status" value="1"/>
</dbReference>
<dbReference type="FunFam" id="3.30.54.20:FF:000002">
    <property type="entry name" value="Threonine--tRNA ligase"/>
    <property type="match status" value="1"/>
</dbReference>
<dbReference type="FunFam" id="3.30.930.10:FF:000002">
    <property type="entry name" value="Threonine--tRNA ligase"/>
    <property type="match status" value="1"/>
</dbReference>
<dbReference type="FunFam" id="3.40.50.800:FF:000001">
    <property type="entry name" value="Threonine--tRNA ligase"/>
    <property type="match status" value="1"/>
</dbReference>
<dbReference type="FunFam" id="3.30.980.10:FF:000005">
    <property type="entry name" value="Threonyl-tRNA synthetase, mitochondrial"/>
    <property type="match status" value="1"/>
</dbReference>
<dbReference type="Gene3D" id="3.10.20.30">
    <property type="match status" value="1"/>
</dbReference>
<dbReference type="Gene3D" id="3.30.54.20">
    <property type="match status" value="1"/>
</dbReference>
<dbReference type="Gene3D" id="3.40.50.800">
    <property type="entry name" value="Anticodon-binding domain"/>
    <property type="match status" value="1"/>
</dbReference>
<dbReference type="Gene3D" id="3.30.930.10">
    <property type="entry name" value="Bira Bifunctional Protein, Domain 2"/>
    <property type="match status" value="1"/>
</dbReference>
<dbReference type="Gene3D" id="3.30.980.10">
    <property type="entry name" value="Threonyl-trna Synthetase, Chain A, domain 2"/>
    <property type="match status" value="1"/>
</dbReference>
<dbReference type="HAMAP" id="MF_00184">
    <property type="entry name" value="Thr_tRNA_synth"/>
    <property type="match status" value="1"/>
</dbReference>
<dbReference type="InterPro" id="IPR002314">
    <property type="entry name" value="aa-tRNA-synt_IIb"/>
</dbReference>
<dbReference type="InterPro" id="IPR006195">
    <property type="entry name" value="aa-tRNA-synth_II"/>
</dbReference>
<dbReference type="InterPro" id="IPR045864">
    <property type="entry name" value="aa-tRNA-synth_II/BPL/LPL"/>
</dbReference>
<dbReference type="InterPro" id="IPR004154">
    <property type="entry name" value="Anticodon-bd"/>
</dbReference>
<dbReference type="InterPro" id="IPR036621">
    <property type="entry name" value="Anticodon-bd_dom_sf"/>
</dbReference>
<dbReference type="InterPro" id="IPR012675">
    <property type="entry name" value="Beta-grasp_dom_sf"/>
</dbReference>
<dbReference type="InterPro" id="IPR004095">
    <property type="entry name" value="TGS"/>
</dbReference>
<dbReference type="InterPro" id="IPR012676">
    <property type="entry name" value="TGS-like"/>
</dbReference>
<dbReference type="InterPro" id="IPR002320">
    <property type="entry name" value="Thr-tRNA-ligase_IIa"/>
</dbReference>
<dbReference type="InterPro" id="IPR018163">
    <property type="entry name" value="Thr/Ala-tRNA-synth_IIc_edit"/>
</dbReference>
<dbReference type="InterPro" id="IPR047246">
    <property type="entry name" value="ThrRS_anticodon"/>
</dbReference>
<dbReference type="InterPro" id="IPR033728">
    <property type="entry name" value="ThrRS_core"/>
</dbReference>
<dbReference type="InterPro" id="IPR012947">
    <property type="entry name" value="tRNA_SAD"/>
</dbReference>
<dbReference type="NCBIfam" id="TIGR00418">
    <property type="entry name" value="thrS"/>
    <property type="match status" value="1"/>
</dbReference>
<dbReference type="PANTHER" id="PTHR11451:SF44">
    <property type="entry name" value="THREONINE--TRNA LIGASE, CHLOROPLASTIC_MITOCHONDRIAL 2"/>
    <property type="match status" value="1"/>
</dbReference>
<dbReference type="PANTHER" id="PTHR11451">
    <property type="entry name" value="THREONINE-TRNA LIGASE"/>
    <property type="match status" value="1"/>
</dbReference>
<dbReference type="Pfam" id="PF03129">
    <property type="entry name" value="HGTP_anticodon"/>
    <property type="match status" value="1"/>
</dbReference>
<dbReference type="Pfam" id="PF02824">
    <property type="entry name" value="TGS"/>
    <property type="match status" value="1"/>
</dbReference>
<dbReference type="Pfam" id="PF00587">
    <property type="entry name" value="tRNA-synt_2b"/>
    <property type="match status" value="1"/>
</dbReference>
<dbReference type="Pfam" id="PF07973">
    <property type="entry name" value="tRNA_SAD"/>
    <property type="match status" value="1"/>
</dbReference>
<dbReference type="PRINTS" id="PR01047">
    <property type="entry name" value="TRNASYNTHTHR"/>
</dbReference>
<dbReference type="SMART" id="SM00863">
    <property type="entry name" value="tRNA_SAD"/>
    <property type="match status" value="1"/>
</dbReference>
<dbReference type="SUPFAM" id="SSF52954">
    <property type="entry name" value="Class II aaRS ABD-related"/>
    <property type="match status" value="1"/>
</dbReference>
<dbReference type="SUPFAM" id="SSF55681">
    <property type="entry name" value="Class II aaRS and biotin synthetases"/>
    <property type="match status" value="1"/>
</dbReference>
<dbReference type="SUPFAM" id="SSF81271">
    <property type="entry name" value="TGS-like"/>
    <property type="match status" value="1"/>
</dbReference>
<dbReference type="SUPFAM" id="SSF55186">
    <property type="entry name" value="ThrRS/AlaRS common domain"/>
    <property type="match status" value="1"/>
</dbReference>
<dbReference type="PROSITE" id="PS50862">
    <property type="entry name" value="AA_TRNA_LIGASE_II"/>
    <property type="match status" value="1"/>
</dbReference>
<dbReference type="PROSITE" id="PS51880">
    <property type="entry name" value="TGS"/>
    <property type="match status" value="1"/>
</dbReference>
<evidence type="ECO:0000255" key="1">
    <source>
        <dbReference type="HAMAP-Rule" id="MF_00184"/>
    </source>
</evidence>
<evidence type="ECO:0000255" key="2">
    <source>
        <dbReference type="PROSITE-ProRule" id="PRU01228"/>
    </source>
</evidence>
<organism>
    <name type="scientific">Shigella flexneri serotype 5b (strain 8401)</name>
    <dbReference type="NCBI Taxonomy" id="373384"/>
    <lineage>
        <taxon>Bacteria</taxon>
        <taxon>Pseudomonadati</taxon>
        <taxon>Pseudomonadota</taxon>
        <taxon>Gammaproteobacteria</taxon>
        <taxon>Enterobacterales</taxon>
        <taxon>Enterobacteriaceae</taxon>
        <taxon>Shigella</taxon>
    </lineage>
</organism>
<protein>
    <recommendedName>
        <fullName evidence="1">Threonine--tRNA ligase</fullName>
        <ecNumber evidence="1">6.1.1.3</ecNumber>
    </recommendedName>
    <alternativeName>
        <fullName evidence="1">Threonyl-tRNA synthetase</fullName>
        <shortName evidence="1">ThrRS</shortName>
    </alternativeName>
</protein>
<feature type="chain" id="PRO_1000020513" description="Threonine--tRNA ligase">
    <location>
        <begin position="1"/>
        <end position="642"/>
    </location>
</feature>
<feature type="domain" description="TGS" evidence="2">
    <location>
        <begin position="1"/>
        <end position="61"/>
    </location>
</feature>
<feature type="region of interest" description="Catalytic" evidence="1">
    <location>
        <begin position="243"/>
        <end position="534"/>
    </location>
</feature>
<feature type="binding site" evidence="1">
    <location>
        <position position="334"/>
    </location>
    <ligand>
        <name>Zn(2+)</name>
        <dbReference type="ChEBI" id="CHEBI:29105"/>
    </ligand>
</feature>
<feature type="binding site" evidence="1">
    <location>
        <position position="385"/>
    </location>
    <ligand>
        <name>Zn(2+)</name>
        <dbReference type="ChEBI" id="CHEBI:29105"/>
    </ligand>
</feature>
<feature type="binding site" evidence="1">
    <location>
        <position position="511"/>
    </location>
    <ligand>
        <name>Zn(2+)</name>
        <dbReference type="ChEBI" id="CHEBI:29105"/>
    </ligand>
</feature>
<feature type="modified residue" description="N6-acetyllysine" evidence="1">
    <location>
        <position position="286"/>
    </location>
</feature>
<comment type="function">
    <text evidence="1">Catalyzes the attachment of threonine to tRNA(Thr) in a two-step reaction: L-threonine is first activated by ATP to form Thr-AMP and then transferred to the acceptor end of tRNA(Thr). Also edits incorrectly charged L-seryl-tRNA(Thr).</text>
</comment>
<comment type="catalytic activity">
    <reaction evidence="1">
        <text>tRNA(Thr) + L-threonine + ATP = L-threonyl-tRNA(Thr) + AMP + diphosphate + H(+)</text>
        <dbReference type="Rhea" id="RHEA:24624"/>
        <dbReference type="Rhea" id="RHEA-COMP:9670"/>
        <dbReference type="Rhea" id="RHEA-COMP:9704"/>
        <dbReference type="ChEBI" id="CHEBI:15378"/>
        <dbReference type="ChEBI" id="CHEBI:30616"/>
        <dbReference type="ChEBI" id="CHEBI:33019"/>
        <dbReference type="ChEBI" id="CHEBI:57926"/>
        <dbReference type="ChEBI" id="CHEBI:78442"/>
        <dbReference type="ChEBI" id="CHEBI:78534"/>
        <dbReference type="ChEBI" id="CHEBI:456215"/>
        <dbReference type="EC" id="6.1.1.3"/>
    </reaction>
</comment>
<comment type="cofactor">
    <cofactor evidence="1">
        <name>Zn(2+)</name>
        <dbReference type="ChEBI" id="CHEBI:29105"/>
    </cofactor>
    <text evidence="1">Binds 1 zinc ion per subunit.</text>
</comment>
<comment type="subunit">
    <text evidence="1">Homodimer.</text>
</comment>
<comment type="subcellular location">
    <subcellularLocation>
        <location evidence="1">Cytoplasm</location>
    </subcellularLocation>
</comment>
<comment type="similarity">
    <text evidence="1">Belongs to the class-II aminoacyl-tRNA synthetase family.</text>
</comment>
<sequence length="642" mass="74014">MPVITLPDGSQRHYDHAVSPMDVALDIGPGLAKACIAGRVNGELVDACDLIENDAQLSIITAKDEEGLEIIRHSCAHLLGHAIKQLWPHTKMAIGPVIDNGFYYDVDLDRTLTQEDVEALEKRMHELAEKNYDVIKKKVSWHEARETFANRGESYKVSILDENIAHDDKPGLYFHEEYVDMCRGPHVPNMRFCHHFKLMKTAGAYWRGDSNNKMLQRIYGTAWADKKALNAYLQRLEEAAKRDHRKIGKQLDLYHMQEEAPGMVFWHNDGWTIFRELEVFVRSKLKEYQYQEVKGPFMMDRVLWEKTGHWDNYKDAMFTTSSENREYCIKPMNCPGHVQIFNQGLKSYRDLPLRMAEFGSCHRNEPSGSLHGLMRVRGFTQDDAHIFCTEEQIRDEVNGCIRLVYDMYSTFGFEKIVVKLSTRPEKRIGSDEMWDRAEADLAVALEENNIPFEYQLGEGAFYGPKIEFTLYDCLDRAWQCGTVQLDFSLPSRLSASYVGEDNERKVPVMIHRAILGSMERFIGILTEEFAGFFPTWLAPVQVVIMNITDSQSEYVNELTQKLSNAGIRVKADLRNEKIGFKIREHTLRRVPYMLVCGDKEVESGKVAVRTRRGKDLGSMDVNEVIEKLQQEIRSRSLKQLEE</sequence>
<keyword id="KW-0007">Acetylation</keyword>
<keyword id="KW-0030">Aminoacyl-tRNA synthetase</keyword>
<keyword id="KW-0067">ATP-binding</keyword>
<keyword id="KW-0963">Cytoplasm</keyword>
<keyword id="KW-0436">Ligase</keyword>
<keyword id="KW-0479">Metal-binding</keyword>
<keyword id="KW-0547">Nucleotide-binding</keyword>
<keyword id="KW-0648">Protein biosynthesis</keyword>
<keyword id="KW-0694">RNA-binding</keyword>
<keyword id="KW-0820">tRNA-binding</keyword>
<keyword id="KW-0862">Zinc</keyword>
<reference key="1">
    <citation type="journal article" date="2006" name="BMC Genomics">
        <title>Complete genome sequence of Shigella flexneri 5b and comparison with Shigella flexneri 2a.</title>
        <authorList>
            <person name="Nie H."/>
            <person name="Yang F."/>
            <person name="Zhang X."/>
            <person name="Yang J."/>
            <person name="Chen L."/>
            <person name="Wang J."/>
            <person name="Xiong Z."/>
            <person name="Peng J."/>
            <person name="Sun L."/>
            <person name="Dong J."/>
            <person name="Xue Y."/>
            <person name="Xu X."/>
            <person name="Chen S."/>
            <person name="Yao Z."/>
            <person name="Shen Y."/>
            <person name="Jin Q."/>
        </authorList>
    </citation>
    <scope>NUCLEOTIDE SEQUENCE [LARGE SCALE GENOMIC DNA]</scope>
    <source>
        <strain>8401</strain>
    </source>
</reference>
<accession>Q0T4S9</accession>
<name>SYT_SHIF8</name>
<gene>
    <name evidence="1" type="primary">thrS</name>
    <name type="ordered locus">SFV_1504</name>
</gene>
<proteinExistence type="inferred from homology"/>